<dbReference type="EMBL" id="Z00044">
    <property type="protein sequence ID" value="CAA77371.1"/>
    <property type="molecule type" value="Genomic_DNA"/>
</dbReference>
<dbReference type="PIR" id="A02743">
    <property type="entry name" value="R3NT18"/>
</dbReference>
<dbReference type="RefSeq" id="NP_054523.1">
    <property type="nucleotide sequence ID" value="NC_001879.2"/>
</dbReference>
<dbReference type="SMR" id="P69660"/>
<dbReference type="GeneID" id="800476"/>
<dbReference type="KEGG" id="nta:800476"/>
<dbReference type="OMA" id="QRTSPIN"/>
<dbReference type="OrthoDB" id="21463at2759"/>
<dbReference type="Proteomes" id="UP000084051">
    <property type="component" value="Unplaced"/>
</dbReference>
<dbReference type="GO" id="GO:0009507">
    <property type="term" value="C:chloroplast"/>
    <property type="evidence" value="ECO:0007669"/>
    <property type="project" value="UniProtKB-SubCell"/>
</dbReference>
<dbReference type="GO" id="GO:1990904">
    <property type="term" value="C:ribonucleoprotein complex"/>
    <property type="evidence" value="ECO:0007669"/>
    <property type="project" value="UniProtKB-KW"/>
</dbReference>
<dbReference type="GO" id="GO:0005840">
    <property type="term" value="C:ribosome"/>
    <property type="evidence" value="ECO:0007669"/>
    <property type="project" value="UniProtKB-KW"/>
</dbReference>
<dbReference type="GO" id="GO:0019843">
    <property type="term" value="F:rRNA binding"/>
    <property type="evidence" value="ECO:0007669"/>
    <property type="project" value="UniProtKB-UniRule"/>
</dbReference>
<dbReference type="GO" id="GO:0003735">
    <property type="term" value="F:structural constituent of ribosome"/>
    <property type="evidence" value="ECO:0007669"/>
    <property type="project" value="InterPro"/>
</dbReference>
<dbReference type="GO" id="GO:0006412">
    <property type="term" value="P:translation"/>
    <property type="evidence" value="ECO:0007669"/>
    <property type="project" value="UniProtKB-UniRule"/>
</dbReference>
<dbReference type="FunFam" id="4.10.640.10:FF:000002">
    <property type="entry name" value="30S ribosomal protein S18, chloroplastic"/>
    <property type="match status" value="1"/>
</dbReference>
<dbReference type="Gene3D" id="4.10.640.10">
    <property type="entry name" value="Ribosomal protein S18"/>
    <property type="match status" value="1"/>
</dbReference>
<dbReference type="HAMAP" id="MF_00270">
    <property type="entry name" value="Ribosomal_bS18"/>
    <property type="match status" value="1"/>
</dbReference>
<dbReference type="InterPro" id="IPR001648">
    <property type="entry name" value="Ribosomal_bS18"/>
</dbReference>
<dbReference type="InterPro" id="IPR018275">
    <property type="entry name" value="Ribosomal_bS18_CS"/>
</dbReference>
<dbReference type="InterPro" id="IPR036870">
    <property type="entry name" value="Ribosomal_bS18_sf"/>
</dbReference>
<dbReference type="NCBIfam" id="TIGR00165">
    <property type="entry name" value="S18"/>
    <property type="match status" value="1"/>
</dbReference>
<dbReference type="PANTHER" id="PTHR13479">
    <property type="entry name" value="30S RIBOSOMAL PROTEIN S18"/>
    <property type="match status" value="1"/>
</dbReference>
<dbReference type="PANTHER" id="PTHR13479:SF40">
    <property type="entry name" value="SMALL RIBOSOMAL SUBUNIT PROTEIN BS18M"/>
    <property type="match status" value="1"/>
</dbReference>
<dbReference type="Pfam" id="PF01084">
    <property type="entry name" value="Ribosomal_S18"/>
    <property type="match status" value="1"/>
</dbReference>
<dbReference type="PRINTS" id="PR00974">
    <property type="entry name" value="RIBOSOMALS18"/>
</dbReference>
<dbReference type="SUPFAM" id="SSF46911">
    <property type="entry name" value="Ribosomal protein S18"/>
    <property type="match status" value="1"/>
</dbReference>
<dbReference type="PROSITE" id="PS00057">
    <property type="entry name" value="RIBOSOMAL_S18"/>
    <property type="match status" value="1"/>
</dbReference>
<evidence type="ECO:0000305" key="1"/>
<protein>
    <recommendedName>
        <fullName evidence="1">Small ribosomal subunit protein bS18c</fullName>
    </recommendedName>
    <alternativeName>
        <fullName>30S ribosomal protein S18, chloroplastic</fullName>
    </alternativeName>
</protein>
<organism>
    <name type="scientific">Nicotiana tabacum</name>
    <name type="common">Common tobacco</name>
    <dbReference type="NCBI Taxonomy" id="4097"/>
    <lineage>
        <taxon>Eukaryota</taxon>
        <taxon>Viridiplantae</taxon>
        <taxon>Streptophyta</taxon>
        <taxon>Embryophyta</taxon>
        <taxon>Tracheophyta</taxon>
        <taxon>Spermatophyta</taxon>
        <taxon>Magnoliopsida</taxon>
        <taxon>eudicotyledons</taxon>
        <taxon>Gunneridae</taxon>
        <taxon>Pentapetalae</taxon>
        <taxon>asterids</taxon>
        <taxon>lamiids</taxon>
        <taxon>Solanales</taxon>
        <taxon>Solanaceae</taxon>
        <taxon>Nicotianoideae</taxon>
        <taxon>Nicotianeae</taxon>
        <taxon>Nicotiana</taxon>
    </lineage>
</organism>
<sequence>MDKSKRPFLKFKRSFRRRLPPIQSGDRIDYRNMSLISRFISEQGKILSRRVNRLTLKQQRLITLAIKQARILSLLPFLNNEKQFERTESTARTTGFKARNK</sequence>
<gene>
    <name type="primary">rps18</name>
</gene>
<keyword id="KW-0150">Chloroplast</keyword>
<keyword id="KW-0934">Plastid</keyword>
<keyword id="KW-1185">Reference proteome</keyword>
<keyword id="KW-0687">Ribonucleoprotein</keyword>
<keyword id="KW-0689">Ribosomal protein</keyword>
<keyword id="KW-0694">RNA-binding</keyword>
<keyword id="KW-0699">rRNA-binding</keyword>
<name>RR18_TOBAC</name>
<comment type="subunit">
    <text>Part of the 30S ribosomal subunit.</text>
</comment>
<comment type="subcellular location">
    <subcellularLocation>
        <location>Plastid</location>
        <location>Chloroplast</location>
    </subcellularLocation>
</comment>
<comment type="similarity">
    <text evidence="1">Belongs to the bacterial ribosomal protein bS18 family.</text>
</comment>
<accession>P69660</accession>
<accession>P06376</accession>
<accession>P58820</accession>
<feature type="chain" id="PRO_0000111313" description="Small ribosomal subunit protein bS18c">
    <location>
        <begin position="1"/>
        <end position="101"/>
    </location>
</feature>
<geneLocation type="chloroplast"/>
<proteinExistence type="inferred from homology"/>
<reference key="1">
    <citation type="journal article" date="1986" name="EMBO J.">
        <title>The complete nucleotide sequence of the tobacco chloroplast genome: its gene organization and expression.</title>
        <authorList>
            <person name="Shinozaki K."/>
            <person name="Ohme M."/>
            <person name="Tanaka M."/>
            <person name="Wakasugi T."/>
            <person name="Hayashida N."/>
            <person name="Matsubayashi T."/>
            <person name="Zaita N."/>
            <person name="Chunwongse J."/>
            <person name="Obokata J."/>
            <person name="Yamaguchi-Shinozaki K."/>
            <person name="Ohto C."/>
            <person name="Torazawa K."/>
            <person name="Meng B.-Y."/>
            <person name="Sugita M."/>
            <person name="Deno H."/>
            <person name="Kamogashira T."/>
            <person name="Yamada K."/>
            <person name="Kusuda J."/>
            <person name="Takaiwa F."/>
            <person name="Kato A."/>
            <person name="Tohdoh N."/>
            <person name="Shimada H."/>
            <person name="Sugiura M."/>
        </authorList>
    </citation>
    <scope>NUCLEOTIDE SEQUENCE [LARGE SCALE GENOMIC DNA]</scope>
    <source>
        <strain>cv. Bright Yellow 4</strain>
    </source>
</reference>